<proteinExistence type="evidence at protein level"/>
<name>ARF1_DROME</name>
<protein>
    <recommendedName>
        <fullName evidence="6">ADP-ribosylation factor 1</fullName>
        <ecNumber evidence="1">3.6.5.2</ecNumber>
    </recommendedName>
</protein>
<keyword id="KW-0963">Cytoplasm</keyword>
<keyword id="KW-0931">ER-Golgi transport</keyword>
<keyword id="KW-0333">Golgi apparatus</keyword>
<keyword id="KW-0342">GTP-binding</keyword>
<keyword id="KW-0378">Hydrolase</keyword>
<keyword id="KW-0449">Lipoprotein</keyword>
<keyword id="KW-0472">Membrane</keyword>
<keyword id="KW-0519">Myristate</keyword>
<keyword id="KW-0547">Nucleotide-binding</keyword>
<keyword id="KW-0653">Protein transport</keyword>
<keyword id="KW-1185">Reference proteome</keyword>
<keyword id="KW-0813">Transport</keyword>
<comment type="function">
    <text evidence="1 4 5">Small GTPase involved in protein trafficking between different compartments. Modulates vesicle budding and uncoating within the Golgi complex. In its GTP-bound form, triggers the recruitment of coatomer proteins to the Golgi membrane. The hydrolysis of ARF1-bound GTP, which is mediated by ARFGAPs proteins, is required for dissociation of coat proteins from Golgi membranes and vesicles (By similarity). Has a role in eye development (PubMed:21976699). Required for cleavage furrow ingression in embryonic cells (PubMed:27535433).</text>
</comment>
<comment type="catalytic activity">
    <reaction evidence="1">
        <text>GTP + H2O = GDP + phosphate + H(+)</text>
        <dbReference type="Rhea" id="RHEA:19669"/>
        <dbReference type="ChEBI" id="CHEBI:15377"/>
        <dbReference type="ChEBI" id="CHEBI:15378"/>
        <dbReference type="ChEBI" id="CHEBI:37565"/>
        <dbReference type="ChEBI" id="CHEBI:43474"/>
        <dbReference type="ChEBI" id="CHEBI:58189"/>
        <dbReference type="EC" id="3.6.5.2"/>
    </reaction>
</comment>
<comment type="activity regulation">
    <text evidence="1">Alternates between an inactive GDP-bound form and an active GTP-bound form (By similarity). Activated by a guanine nucleotide-exchange factor (GEF) and inactivated by GTPase-activating protein (GAP) (By similarity).</text>
</comment>
<comment type="subcellular location">
    <subcellularLocation>
        <location evidence="5">Golgi apparatus membrane</location>
        <topology evidence="1">Lipid-anchor</topology>
        <orientation evidence="8">Cytoplasmic side</orientation>
    </subcellularLocation>
    <subcellularLocation>
        <location evidence="5">Cytoplasm</location>
        <location evidence="5">Cytosol</location>
    </subcellularLocation>
    <text evidence="2 5">In the GDP-bound form, associates transiently with the membranes via its myristoylated N-terminus where guanine nucleotide-exchange factor (GEF)-mediated nucleotide exchange occurs (By similarity). Following nucleotide exchange, the GTP-bound form undergoes a conformational change, leading to the exposure of a myristoylated N-terminal amphipathic helix that provides stable membrane anchorage (By similarity). Localization to the Golgi is dependent on Asap (PubMed:27535433).</text>
</comment>
<comment type="disruption phenotype">
    <text evidence="4 5">Conditional RNAi-mediated knockdown in the eye results in aberrant compound eye morphogenesis (PubMed:21976699). Maternal RNAi-mediated knockdown results in abnormal aggregation of Golgi apparatus and disrupted cleavage furrow ingression in early embryos (PubMed:27535433).</text>
</comment>
<comment type="similarity">
    <text evidence="8">Belongs to the small GTPase superfamily. Arf family.</text>
</comment>
<sequence length="182" mass="20688">MGNVFANLFKGLFGKKEMRILMVGLDAAGKTTILYKLKLGEIVTTIPTIGFNVETVEYKNISFTVWDVGGQDKIRPLWRHYFQNTQGLIFVVDSNDRERIGEAREELMRMLAEDELRDAVLLIFANKQDLPNAMNAAEITDKLGLHSLRNRNWYIQATCATSGDGLYEGLDWLSNQLKNANR</sequence>
<feature type="initiator methionine" description="Removed" evidence="3">
    <location>
        <position position="1"/>
    </location>
</feature>
<feature type="chain" id="PRO_0000207441" description="ADP-ribosylation factor 1">
    <location>
        <begin position="2"/>
        <end position="182"/>
    </location>
</feature>
<feature type="region of interest" description="Important for the stable binding to the membranes" evidence="2">
    <location>
        <begin position="3"/>
        <end position="16"/>
    </location>
</feature>
<feature type="binding site" evidence="1">
    <location>
        <begin position="24"/>
        <end position="32"/>
    </location>
    <ligand>
        <name>GTP</name>
        <dbReference type="ChEBI" id="CHEBI:37565"/>
    </ligand>
</feature>
<feature type="binding site" evidence="1">
    <location>
        <begin position="126"/>
        <end position="129"/>
    </location>
    <ligand>
        <name>GTP</name>
        <dbReference type="ChEBI" id="CHEBI:37565"/>
    </ligand>
</feature>
<feature type="binding site" evidence="1">
    <location>
        <position position="160"/>
    </location>
    <ligand>
        <name>GTP</name>
        <dbReference type="ChEBI" id="CHEBI:37565"/>
    </ligand>
</feature>
<feature type="lipid moiety-binding region" description="N-myristoyl glycine" evidence="3">
    <location>
        <position position="2"/>
    </location>
</feature>
<feature type="mutagenesis site" description="Abnormal aggregation of Golgi apparatus and disrupted cleavage furrow ingression in early embryos. May be insensitive to Asap activation." evidence="5">
    <original>I</original>
    <variation>D</variation>
    <location>
        <position position="46"/>
    </location>
</feature>
<feature type="mutagenesis site" description="No defect in Golgi apparatus and cleavage furrow ingression in early embryos." evidence="5">
    <original>N</original>
    <variation>A</variation>
    <location>
        <position position="52"/>
    </location>
</feature>
<dbReference type="EC" id="3.6.5.2" evidence="1"/>
<dbReference type="EMBL" id="S62079">
    <property type="protein sequence ID" value="AAB27066.1"/>
    <property type="molecule type" value="Genomic_DNA"/>
</dbReference>
<dbReference type="EMBL" id="AE014296">
    <property type="protein sequence ID" value="AAF51871.1"/>
    <property type="molecule type" value="Genomic_DNA"/>
</dbReference>
<dbReference type="EMBL" id="AE014296">
    <property type="protein sequence ID" value="AAF51872.1"/>
    <property type="molecule type" value="Genomic_DNA"/>
</dbReference>
<dbReference type="EMBL" id="AE014296">
    <property type="protein sequence ID" value="AAF51873.1"/>
    <property type="molecule type" value="Genomic_DNA"/>
</dbReference>
<dbReference type="EMBL" id="AE014296">
    <property type="protein sequence ID" value="AAF51874.1"/>
    <property type="molecule type" value="Genomic_DNA"/>
</dbReference>
<dbReference type="EMBL" id="AE014296">
    <property type="protein sequence ID" value="AAN12207.1"/>
    <property type="molecule type" value="Genomic_DNA"/>
</dbReference>
<dbReference type="EMBL" id="AE014296">
    <property type="protein sequence ID" value="ABW08583.1"/>
    <property type="molecule type" value="Genomic_DNA"/>
</dbReference>
<dbReference type="EMBL" id="AE014296">
    <property type="protein sequence ID" value="ABW08584.2"/>
    <property type="molecule type" value="Genomic_DNA"/>
</dbReference>
<dbReference type="EMBL" id="AY060375">
    <property type="protein sequence ID" value="AAL25414.1"/>
    <property type="molecule type" value="mRNA"/>
</dbReference>
<dbReference type="PIR" id="A49520">
    <property type="entry name" value="A49520"/>
</dbReference>
<dbReference type="RefSeq" id="NP_001097667.1">
    <property type="nucleotide sequence ID" value="NM_001104197.3"/>
</dbReference>
<dbReference type="RefSeq" id="NP_001097668.2">
    <property type="nucleotide sequence ID" value="NM_001104198.2"/>
</dbReference>
<dbReference type="RefSeq" id="NP_001262225.1">
    <property type="nucleotide sequence ID" value="NM_001275296.1"/>
</dbReference>
<dbReference type="RefSeq" id="NP_476955.1">
    <property type="nucleotide sequence ID" value="NM_057607.6"/>
</dbReference>
<dbReference type="RefSeq" id="NP_730757.1">
    <property type="nucleotide sequence ID" value="NM_168970.4"/>
</dbReference>
<dbReference type="RefSeq" id="NP_730758.1">
    <property type="nucleotide sequence ID" value="NM_168971.4"/>
</dbReference>
<dbReference type="RefSeq" id="NP_730759.1">
    <property type="nucleotide sequence ID" value="NM_168972.5"/>
</dbReference>
<dbReference type="RefSeq" id="NP_730760.1">
    <property type="nucleotide sequence ID" value="NM_168973.3"/>
</dbReference>
<dbReference type="SMR" id="P61209"/>
<dbReference type="BioGRID" id="65734">
    <property type="interactions" value="80"/>
</dbReference>
<dbReference type="ComplexPortal" id="CPX-2820">
    <property type="entry name" value="COPI vesicle coat complex"/>
</dbReference>
<dbReference type="FunCoup" id="P61209">
    <property type="interactions" value="2744"/>
</dbReference>
<dbReference type="IntAct" id="P61209">
    <property type="interactions" value="49"/>
</dbReference>
<dbReference type="STRING" id="7227.FBpp0078224"/>
<dbReference type="PaxDb" id="7227-FBpp0289184"/>
<dbReference type="DNASU" id="40506"/>
<dbReference type="EnsemblMetazoa" id="FBtr0078571">
    <property type="protein sequence ID" value="FBpp0078222"/>
    <property type="gene ID" value="FBgn0010348"/>
</dbReference>
<dbReference type="EnsemblMetazoa" id="FBtr0078573">
    <property type="protein sequence ID" value="FBpp0078224"/>
    <property type="gene ID" value="FBgn0010348"/>
</dbReference>
<dbReference type="EnsemblMetazoa" id="FBtr0078574">
    <property type="protein sequence ID" value="FBpp0078225"/>
    <property type="gene ID" value="FBgn0010348"/>
</dbReference>
<dbReference type="EnsemblMetazoa" id="FBtr0078575">
    <property type="protein sequence ID" value="FBpp0078226"/>
    <property type="gene ID" value="FBgn0010348"/>
</dbReference>
<dbReference type="EnsemblMetazoa" id="FBtr0112858">
    <property type="protein sequence ID" value="FBpp0111771"/>
    <property type="gene ID" value="FBgn0010348"/>
</dbReference>
<dbReference type="EnsemblMetazoa" id="FBtr0299906">
    <property type="protein sequence ID" value="FBpp0289184"/>
    <property type="gene ID" value="FBgn0010348"/>
</dbReference>
<dbReference type="EnsemblMetazoa" id="FBtr0299907">
    <property type="protein sequence ID" value="FBpp0289185"/>
    <property type="gene ID" value="FBgn0010348"/>
</dbReference>
<dbReference type="EnsemblMetazoa" id="FBtr0332054">
    <property type="protein sequence ID" value="FBpp0304364"/>
    <property type="gene ID" value="FBgn0010348"/>
</dbReference>
<dbReference type="GeneID" id="40506"/>
<dbReference type="KEGG" id="dme:Dmel_CG8385"/>
<dbReference type="UCSC" id="CG8385-RB">
    <property type="organism name" value="d. melanogaster"/>
</dbReference>
<dbReference type="AGR" id="FB:FBgn0010348"/>
<dbReference type="CTD" id="375"/>
<dbReference type="FlyBase" id="FBgn0010348">
    <property type="gene designation" value="Arf1"/>
</dbReference>
<dbReference type="VEuPathDB" id="VectorBase:FBgn0010348"/>
<dbReference type="eggNOG" id="KOG0070">
    <property type="taxonomic scope" value="Eukaryota"/>
</dbReference>
<dbReference type="GeneTree" id="ENSGT00950000183080"/>
<dbReference type="HOGENOM" id="CLU_040729_9_3_1"/>
<dbReference type="InParanoid" id="P61209"/>
<dbReference type="OMA" id="HYYANTN"/>
<dbReference type="OrthoDB" id="2011769at2759"/>
<dbReference type="PhylomeDB" id="P61209"/>
<dbReference type="Reactome" id="R-DME-1660499">
    <property type="pathway name" value="Synthesis of PIPs at the plasma membrane"/>
</dbReference>
<dbReference type="Reactome" id="R-DME-1660514">
    <property type="pathway name" value="Synthesis of PIPs at the Golgi membrane"/>
</dbReference>
<dbReference type="Reactome" id="R-DME-199992">
    <property type="pathway name" value="trans-Golgi Network Vesicle Budding"/>
</dbReference>
<dbReference type="Reactome" id="R-DME-432720">
    <property type="pathway name" value="Lysosome Vesicle Biogenesis"/>
</dbReference>
<dbReference type="Reactome" id="R-DME-432722">
    <property type="pathway name" value="Golgi Associated Vesicle Biogenesis"/>
</dbReference>
<dbReference type="Reactome" id="R-DME-6807878">
    <property type="pathway name" value="COPI-mediated anterograde transport"/>
</dbReference>
<dbReference type="Reactome" id="R-DME-6811434">
    <property type="pathway name" value="COPI-dependent Golgi-to-ER retrograde traffic"/>
</dbReference>
<dbReference type="Reactome" id="R-DME-6811438">
    <property type="pathway name" value="Intra-Golgi traffic"/>
</dbReference>
<dbReference type="SignaLink" id="P61209"/>
<dbReference type="BioGRID-ORCS" id="40506">
    <property type="hits" value="1 hit in 3 CRISPR screens"/>
</dbReference>
<dbReference type="ChiTaRS" id="Arf79F">
    <property type="organism name" value="fly"/>
</dbReference>
<dbReference type="GenomeRNAi" id="40506"/>
<dbReference type="PRO" id="PR:P61209"/>
<dbReference type="Proteomes" id="UP000000803">
    <property type="component" value="Chromosome 3L"/>
</dbReference>
<dbReference type="Bgee" id="FBgn0010348">
    <property type="expression patterns" value="Expressed in saliva-secreting gland and 252 other cell types or tissues"/>
</dbReference>
<dbReference type="ExpressionAtlas" id="P61209">
    <property type="expression patterns" value="baseline and differential"/>
</dbReference>
<dbReference type="GO" id="GO:0045177">
    <property type="term" value="C:apical part of cell"/>
    <property type="evidence" value="ECO:0000314"/>
    <property type="project" value="UniProtKB"/>
</dbReference>
<dbReference type="GO" id="GO:0032154">
    <property type="term" value="C:cleavage furrow"/>
    <property type="evidence" value="ECO:0000314"/>
    <property type="project" value="FlyBase"/>
</dbReference>
<dbReference type="GO" id="GO:0005737">
    <property type="term" value="C:cytoplasm"/>
    <property type="evidence" value="ECO:0000314"/>
    <property type="project" value="UniProtKB"/>
</dbReference>
<dbReference type="GO" id="GO:0005829">
    <property type="term" value="C:cytosol"/>
    <property type="evidence" value="ECO:0007669"/>
    <property type="project" value="UniProtKB-SubCell"/>
</dbReference>
<dbReference type="GO" id="GO:0005768">
    <property type="term" value="C:endosome"/>
    <property type="evidence" value="ECO:0000314"/>
    <property type="project" value="FlyBase"/>
</dbReference>
<dbReference type="GO" id="GO:0005794">
    <property type="term" value="C:Golgi apparatus"/>
    <property type="evidence" value="ECO:0000314"/>
    <property type="project" value="UniProtKB"/>
</dbReference>
<dbReference type="GO" id="GO:0000139">
    <property type="term" value="C:Golgi membrane"/>
    <property type="evidence" value="ECO:0007669"/>
    <property type="project" value="UniProtKB-SubCell"/>
</dbReference>
<dbReference type="GO" id="GO:0005795">
    <property type="term" value="C:Golgi stack"/>
    <property type="evidence" value="ECO:0000314"/>
    <property type="project" value="FlyBase"/>
</dbReference>
<dbReference type="GO" id="GO:0005764">
    <property type="term" value="C:lysosome"/>
    <property type="evidence" value="ECO:0000314"/>
    <property type="project" value="FlyBase"/>
</dbReference>
<dbReference type="GO" id="GO:0005886">
    <property type="term" value="C:plasma membrane"/>
    <property type="evidence" value="ECO:0000318"/>
    <property type="project" value="GO_Central"/>
</dbReference>
<dbReference type="GO" id="GO:0098793">
    <property type="term" value="C:presynapse"/>
    <property type="evidence" value="ECO:0007669"/>
    <property type="project" value="GOC"/>
</dbReference>
<dbReference type="GO" id="GO:0005525">
    <property type="term" value="F:GTP binding"/>
    <property type="evidence" value="ECO:0000318"/>
    <property type="project" value="GO_Central"/>
</dbReference>
<dbReference type="GO" id="GO:0003924">
    <property type="term" value="F:GTPase activity"/>
    <property type="evidence" value="ECO:0000315"/>
    <property type="project" value="FlyBase"/>
</dbReference>
<dbReference type="GO" id="GO:0032011">
    <property type="term" value="P:ARF protein signal transduction"/>
    <property type="evidence" value="ECO:0000316"/>
    <property type="project" value="FlyBase"/>
</dbReference>
<dbReference type="GO" id="GO:0048749">
    <property type="term" value="P:compound eye development"/>
    <property type="evidence" value="ECO:0000315"/>
    <property type="project" value="FlyBase"/>
</dbReference>
<dbReference type="GO" id="GO:0001745">
    <property type="term" value="P:compound eye morphogenesis"/>
    <property type="evidence" value="ECO:0000315"/>
    <property type="project" value="UniProtKB"/>
</dbReference>
<dbReference type="GO" id="GO:0006897">
    <property type="term" value="P:endocytosis"/>
    <property type="evidence" value="ECO:0000315"/>
    <property type="project" value="FlyBase"/>
</dbReference>
<dbReference type="GO" id="GO:0043001">
    <property type="term" value="P:Golgi to plasma membrane protein transport"/>
    <property type="evidence" value="ECO:0000315"/>
    <property type="project" value="FlyBase"/>
</dbReference>
<dbReference type="GO" id="GO:0061484">
    <property type="term" value="P:hematopoietic stem cell homeostasis"/>
    <property type="evidence" value="ECO:0000315"/>
    <property type="project" value="FlyBase"/>
</dbReference>
<dbReference type="GO" id="GO:0007476">
    <property type="term" value="P:imaginal disc-derived wing morphogenesis"/>
    <property type="evidence" value="ECO:0000316"/>
    <property type="project" value="FlyBase"/>
</dbReference>
<dbReference type="GO" id="GO:0006886">
    <property type="term" value="P:intracellular protein transport"/>
    <property type="evidence" value="ECO:0000318"/>
    <property type="project" value="GO_Central"/>
</dbReference>
<dbReference type="GO" id="GO:0007112">
    <property type="term" value="P:male meiosis cytokinesis"/>
    <property type="evidence" value="ECO:0000315"/>
    <property type="project" value="FlyBase"/>
</dbReference>
<dbReference type="GO" id="GO:1990386">
    <property type="term" value="P:mitotic cleavage furrow ingression"/>
    <property type="evidence" value="ECO:0000315"/>
    <property type="project" value="UniProtKB"/>
</dbReference>
<dbReference type="GO" id="GO:0035331">
    <property type="term" value="P:negative regulation of hippo signaling"/>
    <property type="evidence" value="ECO:0000315"/>
    <property type="project" value="FlyBase"/>
</dbReference>
<dbReference type="GO" id="GO:0007269">
    <property type="term" value="P:neurotransmitter secretion"/>
    <property type="evidence" value="ECO:0000304"/>
    <property type="project" value="FlyBase"/>
</dbReference>
<dbReference type="GO" id="GO:0045807">
    <property type="term" value="P:positive regulation of endocytosis"/>
    <property type="evidence" value="ECO:0000315"/>
    <property type="project" value="FlyBase"/>
</dbReference>
<dbReference type="GO" id="GO:1904801">
    <property type="term" value="P:positive regulation of neuron remodeling"/>
    <property type="evidence" value="ECO:0000315"/>
    <property type="project" value="FlyBase"/>
</dbReference>
<dbReference type="GO" id="GO:0006892">
    <property type="term" value="P:post-Golgi vesicle-mediated transport"/>
    <property type="evidence" value="ECO:0000315"/>
    <property type="project" value="FlyBase"/>
</dbReference>
<dbReference type="GO" id="GO:0002786">
    <property type="term" value="P:regulation of antibacterial peptide production"/>
    <property type="evidence" value="ECO:0000315"/>
    <property type="project" value="FlyBase"/>
</dbReference>
<dbReference type="GO" id="GO:0010883">
    <property type="term" value="P:regulation of lipid storage"/>
    <property type="evidence" value="ECO:0000314"/>
    <property type="project" value="FlyBase"/>
</dbReference>
<dbReference type="GO" id="GO:0048488">
    <property type="term" value="P:synaptic vesicle endocytosis"/>
    <property type="evidence" value="ECO:0000304"/>
    <property type="project" value="FlyBase"/>
</dbReference>
<dbReference type="GO" id="GO:0016192">
    <property type="term" value="P:vesicle-mediated transport"/>
    <property type="evidence" value="ECO:0000318"/>
    <property type="project" value="GO_Central"/>
</dbReference>
<dbReference type="CDD" id="cd04150">
    <property type="entry name" value="Arf1_5_like"/>
    <property type="match status" value="1"/>
</dbReference>
<dbReference type="FunFam" id="3.40.50.300:FF:003500">
    <property type="entry name" value="ADP-ribosylation factor 1"/>
    <property type="match status" value="1"/>
</dbReference>
<dbReference type="Gene3D" id="3.40.50.300">
    <property type="entry name" value="P-loop containing nucleotide triphosphate hydrolases"/>
    <property type="match status" value="1"/>
</dbReference>
<dbReference type="InterPro" id="IPR045872">
    <property type="entry name" value="Arf1-5-like"/>
</dbReference>
<dbReference type="InterPro" id="IPR027417">
    <property type="entry name" value="P-loop_NTPase"/>
</dbReference>
<dbReference type="InterPro" id="IPR005225">
    <property type="entry name" value="Small_GTP-bd"/>
</dbReference>
<dbReference type="InterPro" id="IPR024156">
    <property type="entry name" value="Small_GTPase_ARF"/>
</dbReference>
<dbReference type="InterPro" id="IPR006689">
    <property type="entry name" value="Small_GTPase_ARF/SAR"/>
</dbReference>
<dbReference type="NCBIfam" id="TIGR00231">
    <property type="entry name" value="small_GTP"/>
    <property type="match status" value="1"/>
</dbReference>
<dbReference type="PANTHER" id="PTHR11711">
    <property type="entry name" value="ADP RIBOSYLATION FACTOR-RELATED"/>
    <property type="match status" value="1"/>
</dbReference>
<dbReference type="Pfam" id="PF00025">
    <property type="entry name" value="Arf"/>
    <property type="match status" value="1"/>
</dbReference>
<dbReference type="PRINTS" id="PR00328">
    <property type="entry name" value="SAR1GTPBP"/>
</dbReference>
<dbReference type="SMART" id="SM00177">
    <property type="entry name" value="ARF"/>
    <property type="match status" value="1"/>
</dbReference>
<dbReference type="SMART" id="SM00175">
    <property type="entry name" value="RAB"/>
    <property type="match status" value="1"/>
</dbReference>
<dbReference type="SMART" id="SM00178">
    <property type="entry name" value="SAR"/>
    <property type="match status" value="1"/>
</dbReference>
<dbReference type="SUPFAM" id="SSF52540">
    <property type="entry name" value="P-loop containing nucleoside triphosphate hydrolases"/>
    <property type="match status" value="1"/>
</dbReference>
<dbReference type="PROSITE" id="PS51417">
    <property type="entry name" value="ARF"/>
    <property type="match status" value="1"/>
</dbReference>
<accession>P61209</accession>
<accession>A4V2B1</accession>
<accession>A8JNX4</accession>
<accession>P35676</accession>
<accession>Q9VNQ2</accession>
<evidence type="ECO:0000250" key="1">
    <source>
        <dbReference type="UniProtKB" id="P84077"/>
    </source>
</evidence>
<evidence type="ECO:0000250" key="2">
    <source>
        <dbReference type="UniProtKB" id="P84080"/>
    </source>
</evidence>
<evidence type="ECO:0000255" key="3"/>
<evidence type="ECO:0000269" key="4">
    <source>
    </source>
</evidence>
<evidence type="ECO:0000269" key="5">
    <source>
    </source>
</evidence>
<evidence type="ECO:0000303" key="6">
    <source>
    </source>
</evidence>
<evidence type="ECO:0000303" key="7">
    <source>
    </source>
</evidence>
<evidence type="ECO:0000305" key="8"/>
<evidence type="ECO:0000312" key="9">
    <source>
        <dbReference type="FlyBase" id="FBgn0010348"/>
    </source>
</evidence>
<gene>
    <name evidence="6 9" type="primary">Arf1</name>
    <name evidence="7" type="synonym">Arf79F</name>
    <name evidence="9" type="ORF">CG8385</name>
</gene>
<reference key="1">
    <citation type="journal article" date="1993" name="Biochemistry">
        <title>Molecular characterization of a conserved, guanine nucleotide-dependent ADP-ribosylation factor in Drosophila melanogaster.</title>
        <authorList>
            <person name="Murtagh J.J. Jr."/>
            <person name="Lee F.-J.S."/>
            <person name="Deak P."/>
            <person name="Hall L.M."/>
            <person name="Monaco L."/>
            <person name="Lee C.M."/>
            <person name="Stevens L.A."/>
            <person name="Moss J."/>
            <person name="Vaughan M."/>
        </authorList>
    </citation>
    <scope>NUCLEOTIDE SEQUENCE [GENOMIC DNA]</scope>
</reference>
<reference key="2">
    <citation type="journal article" date="2000" name="Science">
        <title>The genome sequence of Drosophila melanogaster.</title>
        <authorList>
            <person name="Adams M.D."/>
            <person name="Celniker S.E."/>
            <person name="Holt R.A."/>
            <person name="Evans C.A."/>
            <person name="Gocayne J.D."/>
            <person name="Amanatides P.G."/>
            <person name="Scherer S.E."/>
            <person name="Li P.W."/>
            <person name="Hoskins R.A."/>
            <person name="Galle R.F."/>
            <person name="George R.A."/>
            <person name="Lewis S.E."/>
            <person name="Richards S."/>
            <person name="Ashburner M."/>
            <person name="Henderson S.N."/>
            <person name="Sutton G.G."/>
            <person name="Wortman J.R."/>
            <person name="Yandell M.D."/>
            <person name="Zhang Q."/>
            <person name="Chen L.X."/>
            <person name="Brandon R.C."/>
            <person name="Rogers Y.-H.C."/>
            <person name="Blazej R.G."/>
            <person name="Champe M."/>
            <person name="Pfeiffer B.D."/>
            <person name="Wan K.H."/>
            <person name="Doyle C."/>
            <person name="Baxter E.G."/>
            <person name="Helt G."/>
            <person name="Nelson C.R."/>
            <person name="Miklos G.L.G."/>
            <person name="Abril J.F."/>
            <person name="Agbayani A."/>
            <person name="An H.-J."/>
            <person name="Andrews-Pfannkoch C."/>
            <person name="Baldwin D."/>
            <person name="Ballew R.M."/>
            <person name="Basu A."/>
            <person name="Baxendale J."/>
            <person name="Bayraktaroglu L."/>
            <person name="Beasley E.M."/>
            <person name="Beeson K.Y."/>
            <person name="Benos P.V."/>
            <person name="Berman B.P."/>
            <person name="Bhandari D."/>
            <person name="Bolshakov S."/>
            <person name="Borkova D."/>
            <person name="Botchan M.R."/>
            <person name="Bouck J."/>
            <person name="Brokstein P."/>
            <person name="Brottier P."/>
            <person name="Burtis K.C."/>
            <person name="Busam D.A."/>
            <person name="Butler H."/>
            <person name="Cadieu E."/>
            <person name="Center A."/>
            <person name="Chandra I."/>
            <person name="Cherry J.M."/>
            <person name="Cawley S."/>
            <person name="Dahlke C."/>
            <person name="Davenport L.B."/>
            <person name="Davies P."/>
            <person name="de Pablos B."/>
            <person name="Delcher A."/>
            <person name="Deng Z."/>
            <person name="Mays A.D."/>
            <person name="Dew I."/>
            <person name="Dietz S.M."/>
            <person name="Dodson K."/>
            <person name="Doup L.E."/>
            <person name="Downes M."/>
            <person name="Dugan-Rocha S."/>
            <person name="Dunkov B.C."/>
            <person name="Dunn P."/>
            <person name="Durbin K.J."/>
            <person name="Evangelista C.C."/>
            <person name="Ferraz C."/>
            <person name="Ferriera S."/>
            <person name="Fleischmann W."/>
            <person name="Fosler C."/>
            <person name="Gabrielian A.E."/>
            <person name="Garg N.S."/>
            <person name="Gelbart W.M."/>
            <person name="Glasser K."/>
            <person name="Glodek A."/>
            <person name="Gong F."/>
            <person name="Gorrell J.H."/>
            <person name="Gu Z."/>
            <person name="Guan P."/>
            <person name="Harris M."/>
            <person name="Harris N.L."/>
            <person name="Harvey D.A."/>
            <person name="Heiman T.J."/>
            <person name="Hernandez J.R."/>
            <person name="Houck J."/>
            <person name="Hostin D."/>
            <person name="Houston K.A."/>
            <person name="Howland T.J."/>
            <person name="Wei M.-H."/>
            <person name="Ibegwam C."/>
            <person name="Jalali M."/>
            <person name="Kalush F."/>
            <person name="Karpen G.H."/>
            <person name="Ke Z."/>
            <person name="Kennison J.A."/>
            <person name="Ketchum K.A."/>
            <person name="Kimmel B.E."/>
            <person name="Kodira C.D."/>
            <person name="Kraft C.L."/>
            <person name="Kravitz S."/>
            <person name="Kulp D."/>
            <person name="Lai Z."/>
            <person name="Lasko P."/>
            <person name="Lei Y."/>
            <person name="Levitsky A.A."/>
            <person name="Li J.H."/>
            <person name="Li Z."/>
            <person name="Liang Y."/>
            <person name="Lin X."/>
            <person name="Liu X."/>
            <person name="Mattei B."/>
            <person name="McIntosh T.C."/>
            <person name="McLeod M.P."/>
            <person name="McPherson D."/>
            <person name="Merkulov G."/>
            <person name="Milshina N.V."/>
            <person name="Mobarry C."/>
            <person name="Morris J."/>
            <person name="Moshrefi A."/>
            <person name="Mount S.M."/>
            <person name="Moy M."/>
            <person name="Murphy B."/>
            <person name="Murphy L."/>
            <person name="Muzny D.M."/>
            <person name="Nelson D.L."/>
            <person name="Nelson D.R."/>
            <person name="Nelson K.A."/>
            <person name="Nixon K."/>
            <person name="Nusskern D.R."/>
            <person name="Pacleb J.M."/>
            <person name="Palazzolo M."/>
            <person name="Pittman G.S."/>
            <person name="Pan S."/>
            <person name="Pollard J."/>
            <person name="Puri V."/>
            <person name="Reese M.G."/>
            <person name="Reinert K."/>
            <person name="Remington K."/>
            <person name="Saunders R.D.C."/>
            <person name="Scheeler F."/>
            <person name="Shen H."/>
            <person name="Shue B.C."/>
            <person name="Siden-Kiamos I."/>
            <person name="Simpson M."/>
            <person name="Skupski M.P."/>
            <person name="Smith T.J."/>
            <person name="Spier E."/>
            <person name="Spradling A.C."/>
            <person name="Stapleton M."/>
            <person name="Strong R."/>
            <person name="Sun E."/>
            <person name="Svirskas R."/>
            <person name="Tector C."/>
            <person name="Turner R."/>
            <person name="Venter E."/>
            <person name="Wang A.H."/>
            <person name="Wang X."/>
            <person name="Wang Z.-Y."/>
            <person name="Wassarman D.A."/>
            <person name="Weinstock G.M."/>
            <person name="Weissenbach J."/>
            <person name="Williams S.M."/>
            <person name="Woodage T."/>
            <person name="Worley K.C."/>
            <person name="Wu D."/>
            <person name="Yang S."/>
            <person name="Yao Q.A."/>
            <person name="Ye J."/>
            <person name="Yeh R.-F."/>
            <person name="Zaveri J.S."/>
            <person name="Zhan M."/>
            <person name="Zhang G."/>
            <person name="Zhao Q."/>
            <person name="Zheng L."/>
            <person name="Zheng X.H."/>
            <person name="Zhong F.N."/>
            <person name="Zhong W."/>
            <person name="Zhou X."/>
            <person name="Zhu S.C."/>
            <person name="Zhu X."/>
            <person name="Smith H.O."/>
            <person name="Gibbs R.A."/>
            <person name="Myers E.W."/>
            <person name="Rubin G.M."/>
            <person name="Venter J.C."/>
        </authorList>
    </citation>
    <scope>NUCLEOTIDE SEQUENCE [LARGE SCALE GENOMIC DNA]</scope>
    <source>
        <strain>Berkeley</strain>
    </source>
</reference>
<reference key="3">
    <citation type="journal article" date="2002" name="Genome Biol.">
        <title>Annotation of the Drosophila melanogaster euchromatic genome: a systematic review.</title>
        <authorList>
            <person name="Misra S."/>
            <person name="Crosby M.A."/>
            <person name="Mungall C.J."/>
            <person name="Matthews B.B."/>
            <person name="Campbell K.S."/>
            <person name="Hradecky P."/>
            <person name="Huang Y."/>
            <person name="Kaminker J.S."/>
            <person name="Millburn G.H."/>
            <person name="Prochnik S.E."/>
            <person name="Smith C.D."/>
            <person name="Tupy J.L."/>
            <person name="Whitfield E.J."/>
            <person name="Bayraktaroglu L."/>
            <person name="Berman B.P."/>
            <person name="Bettencourt B.R."/>
            <person name="Celniker S.E."/>
            <person name="de Grey A.D.N.J."/>
            <person name="Drysdale R.A."/>
            <person name="Harris N.L."/>
            <person name="Richter J."/>
            <person name="Russo S."/>
            <person name="Schroeder A.J."/>
            <person name="Shu S.Q."/>
            <person name="Stapleton M."/>
            <person name="Yamada C."/>
            <person name="Ashburner M."/>
            <person name="Gelbart W.M."/>
            <person name="Rubin G.M."/>
            <person name="Lewis S.E."/>
        </authorList>
    </citation>
    <scope>GENOME REANNOTATION</scope>
    <source>
        <strain>Berkeley</strain>
    </source>
</reference>
<reference key="4">
    <citation type="journal article" date="2002" name="Genome Biol.">
        <title>A Drosophila full-length cDNA resource.</title>
        <authorList>
            <person name="Stapleton M."/>
            <person name="Carlson J.W."/>
            <person name="Brokstein P."/>
            <person name="Yu C."/>
            <person name="Champe M."/>
            <person name="George R.A."/>
            <person name="Guarin H."/>
            <person name="Kronmiller B."/>
            <person name="Pacleb J.M."/>
            <person name="Park S."/>
            <person name="Wan K.H."/>
            <person name="Rubin G.M."/>
            <person name="Celniker S.E."/>
        </authorList>
    </citation>
    <scope>NUCLEOTIDE SEQUENCE [LARGE SCALE MRNA]</scope>
    <source>
        <strain>Berkeley</strain>
        <tissue>Embryo</tissue>
    </source>
</reference>
<reference key="5">
    <citation type="journal article" date="2011" name="Mol. Biol. Cell">
        <title>Role for a Cindr-Arf6 axis in patterning emerging epithelia.</title>
        <authorList>
            <person name="Johnson R.I."/>
            <person name="Sedgwick A."/>
            <person name="D'Souza-Schorey C."/>
            <person name="Cagan R.L."/>
        </authorList>
    </citation>
    <scope>FUNCTION</scope>
    <scope>DISRUPTION PHENOTYPE</scope>
</reference>
<reference key="6">
    <citation type="journal article" date="2016" name="Mol. Biol. Cell">
        <title>The Arf GAP Asap promotes Arf1 function at the Golgi for cleavage furrow biosynthesis in Drosophila.</title>
        <authorList>
            <person name="Rodrigues F.F."/>
            <person name="Shao W."/>
            <person name="Harris T.J."/>
        </authorList>
    </citation>
    <scope>FUNCTION</scope>
    <scope>SUBCELLULAR LOCATION</scope>
    <scope>DISRUPTION PHENOTYPE</scope>
    <scope>MUTAGENESIS OF ILE-46 AND ASN-52</scope>
</reference>
<organism>
    <name type="scientific">Drosophila melanogaster</name>
    <name type="common">Fruit fly</name>
    <dbReference type="NCBI Taxonomy" id="7227"/>
    <lineage>
        <taxon>Eukaryota</taxon>
        <taxon>Metazoa</taxon>
        <taxon>Ecdysozoa</taxon>
        <taxon>Arthropoda</taxon>
        <taxon>Hexapoda</taxon>
        <taxon>Insecta</taxon>
        <taxon>Pterygota</taxon>
        <taxon>Neoptera</taxon>
        <taxon>Endopterygota</taxon>
        <taxon>Diptera</taxon>
        <taxon>Brachycera</taxon>
        <taxon>Muscomorpha</taxon>
        <taxon>Ephydroidea</taxon>
        <taxon>Drosophilidae</taxon>
        <taxon>Drosophila</taxon>
        <taxon>Sophophora</taxon>
    </lineage>
</organism>